<accession>A7MPB7</accession>
<comment type="function">
    <text evidence="1">NDH-1 shuttles electrons from NADH, via FMN and iron-sulfur (Fe-S) centers, to quinones in the respiratory chain. The immediate electron acceptor for the enzyme in this species is believed to be ubiquinone. Couples the redox reaction to proton translocation (for every two electrons transferred, four hydrogen ions are translocated across the cytoplasmic membrane), and thus conserves the redox energy in a proton gradient.</text>
</comment>
<comment type="catalytic activity">
    <reaction evidence="1">
        <text>a quinone + NADH + 5 H(+)(in) = a quinol + NAD(+) + 4 H(+)(out)</text>
        <dbReference type="Rhea" id="RHEA:57888"/>
        <dbReference type="ChEBI" id="CHEBI:15378"/>
        <dbReference type="ChEBI" id="CHEBI:24646"/>
        <dbReference type="ChEBI" id="CHEBI:57540"/>
        <dbReference type="ChEBI" id="CHEBI:57945"/>
        <dbReference type="ChEBI" id="CHEBI:132124"/>
    </reaction>
</comment>
<comment type="subunit">
    <text evidence="1">NDH-1 is composed of 13 different subunits. Subunits NuoA, H, J, K, L, M, N constitute the membrane sector of the complex.</text>
</comment>
<comment type="subcellular location">
    <subcellularLocation>
        <location evidence="1">Cell inner membrane</location>
        <topology evidence="1">Multi-pass membrane protein</topology>
    </subcellularLocation>
</comment>
<comment type="similarity">
    <text evidence="1">Belongs to the complex I subunit 4L family.</text>
</comment>
<name>NUOK_CROS8</name>
<proteinExistence type="inferred from homology"/>
<organism>
    <name type="scientific">Cronobacter sakazakii (strain ATCC BAA-894)</name>
    <name type="common">Enterobacter sakazakii</name>
    <dbReference type="NCBI Taxonomy" id="290339"/>
    <lineage>
        <taxon>Bacteria</taxon>
        <taxon>Pseudomonadati</taxon>
        <taxon>Pseudomonadota</taxon>
        <taxon>Gammaproteobacteria</taxon>
        <taxon>Enterobacterales</taxon>
        <taxon>Enterobacteriaceae</taxon>
        <taxon>Cronobacter</taxon>
    </lineage>
</organism>
<feature type="chain" id="PRO_0000390036" description="NADH-quinone oxidoreductase subunit K">
    <location>
        <begin position="1"/>
        <end position="100"/>
    </location>
</feature>
<feature type="transmembrane region" description="Helical" evidence="1">
    <location>
        <begin position="4"/>
        <end position="24"/>
    </location>
</feature>
<feature type="transmembrane region" description="Helical" evidence="1">
    <location>
        <begin position="28"/>
        <end position="48"/>
    </location>
</feature>
<feature type="transmembrane region" description="Helical" evidence="1">
    <location>
        <begin position="60"/>
        <end position="80"/>
    </location>
</feature>
<keyword id="KW-0997">Cell inner membrane</keyword>
<keyword id="KW-1003">Cell membrane</keyword>
<keyword id="KW-0472">Membrane</keyword>
<keyword id="KW-0520">NAD</keyword>
<keyword id="KW-0874">Quinone</keyword>
<keyword id="KW-1185">Reference proteome</keyword>
<keyword id="KW-1278">Translocase</keyword>
<keyword id="KW-0812">Transmembrane</keyword>
<keyword id="KW-1133">Transmembrane helix</keyword>
<keyword id="KW-0813">Transport</keyword>
<keyword id="KW-0830">Ubiquinone</keyword>
<protein>
    <recommendedName>
        <fullName evidence="1">NADH-quinone oxidoreductase subunit K</fullName>
        <ecNumber evidence="1">7.1.1.-</ecNumber>
    </recommendedName>
    <alternativeName>
        <fullName evidence="1">NADH dehydrogenase I subunit K</fullName>
    </alternativeName>
    <alternativeName>
        <fullName evidence="1">NDH-1 subunit K</fullName>
    </alternativeName>
</protein>
<gene>
    <name evidence="1" type="primary">nuoK</name>
    <name type="ordered locus">ESA_00941</name>
</gene>
<reference key="1">
    <citation type="journal article" date="2010" name="PLoS ONE">
        <title>Genome sequence of Cronobacter sakazakii BAA-894 and comparative genomic hybridization analysis with other Cronobacter species.</title>
        <authorList>
            <person name="Kucerova E."/>
            <person name="Clifton S.W."/>
            <person name="Xia X.Q."/>
            <person name="Long F."/>
            <person name="Porwollik S."/>
            <person name="Fulton L."/>
            <person name="Fronick C."/>
            <person name="Minx P."/>
            <person name="Kyung K."/>
            <person name="Warren W."/>
            <person name="Fulton R."/>
            <person name="Feng D."/>
            <person name="Wollam A."/>
            <person name="Shah N."/>
            <person name="Bhonagiri V."/>
            <person name="Nash W.E."/>
            <person name="Hallsworth-Pepin K."/>
            <person name="Wilson R.K."/>
            <person name="McClelland M."/>
            <person name="Forsythe S.J."/>
        </authorList>
    </citation>
    <scope>NUCLEOTIDE SEQUENCE [LARGE SCALE GENOMIC DNA]</scope>
    <source>
        <strain>ATCC BAA-894</strain>
    </source>
</reference>
<sequence length="100" mass="10843">MIPLQHGLILAAILFVLGLTGLVIRRNLLFMLIGLEIMINAAALAFVVAGSYWGQTDGQIMYILAISLAAAEASIGLALLLQLHRRRQNLNIDSVSEMRG</sequence>
<evidence type="ECO:0000255" key="1">
    <source>
        <dbReference type="HAMAP-Rule" id="MF_01456"/>
    </source>
</evidence>
<dbReference type="EC" id="7.1.1.-" evidence="1"/>
<dbReference type="EMBL" id="CP000783">
    <property type="protein sequence ID" value="ABU76211.1"/>
    <property type="molecule type" value="Genomic_DNA"/>
</dbReference>
<dbReference type="RefSeq" id="WP_004388260.1">
    <property type="nucleotide sequence ID" value="NC_009778.1"/>
</dbReference>
<dbReference type="SMR" id="A7MPB7"/>
<dbReference type="GeneID" id="92805528"/>
<dbReference type="KEGG" id="esa:ESA_00941"/>
<dbReference type="HOGENOM" id="CLU_144724_0_1_6"/>
<dbReference type="Proteomes" id="UP000000260">
    <property type="component" value="Chromosome"/>
</dbReference>
<dbReference type="GO" id="GO:0030964">
    <property type="term" value="C:NADH dehydrogenase complex"/>
    <property type="evidence" value="ECO:0007669"/>
    <property type="project" value="TreeGrafter"/>
</dbReference>
<dbReference type="GO" id="GO:0005886">
    <property type="term" value="C:plasma membrane"/>
    <property type="evidence" value="ECO:0007669"/>
    <property type="project" value="UniProtKB-SubCell"/>
</dbReference>
<dbReference type="GO" id="GO:0050136">
    <property type="term" value="F:NADH:ubiquinone reductase (non-electrogenic) activity"/>
    <property type="evidence" value="ECO:0007669"/>
    <property type="project" value="UniProtKB-UniRule"/>
</dbReference>
<dbReference type="GO" id="GO:0048038">
    <property type="term" value="F:quinone binding"/>
    <property type="evidence" value="ECO:0007669"/>
    <property type="project" value="UniProtKB-KW"/>
</dbReference>
<dbReference type="GO" id="GO:0042773">
    <property type="term" value="P:ATP synthesis coupled electron transport"/>
    <property type="evidence" value="ECO:0007669"/>
    <property type="project" value="InterPro"/>
</dbReference>
<dbReference type="FunFam" id="1.10.287.3510:FF:000001">
    <property type="entry name" value="NADH-quinone oxidoreductase subunit K"/>
    <property type="match status" value="1"/>
</dbReference>
<dbReference type="Gene3D" id="1.10.287.3510">
    <property type="match status" value="1"/>
</dbReference>
<dbReference type="HAMAP" id="MF_01456">
    <property type="entry name" value="NDH1_NuoK"/>
    <property type="match status" value="1"/>
</dbReference>
<dbReference type="InterPro" id="IPR001133">
    <property type="entry name" value="NADH_UbQ_OxRdtase_chain4L/K"/>
</dbReference>
<dbReference type="InterPro" id="IPR039428">
    <property type="entry name" value="NUOK/Mnh_C1-like"/>
</dbReference>
<dbReference type="NCBIfam" id="NF004319">
    <property type="entry name" value="PRK05715.1-1"/>
    <property type="match status" value="1"/>
</dbReference>
<dbReference type="NCBIfam" id="NF004320">
    <property type="entry name" value="PRK05715.1-2"/>
    <property type="match status" value="1"/>
</dbReference>
<dbReference type="PANTHER" id="PTHR11434:SF16">
    <property type="entry name" value="NADH-UBIQUINONE OXIDOREDUCTASE CHAIN 4L"/>
    <property type="match status" value="1"/>
</dbReference>
<dbReference type="PANTHER" id="PTHR11434">
    <property type="entry name" value="NADH-UBIQUINONE OXIDOREDUCTASE SUBUNIT ND4L"/>
    <property type="match status" value="1"/>
</dbReference>
<dbReference type="Pfam" id="PF00420">
    <property type="entry name" value="Oxidored_q2"/>
    <property type="match status" value="1"/>
</dbReference>